<keyword id="KW-0010">Activator</keyword>
<keyword id="KW-0963">Cytoplasm</keyword>
<keyword id="KW-0238">DNA-binding</keyword>
<keyword id="KW-1017">Isopeptide bond</keyword>
<keyword id="KW-1185">Reference proteome</keyword>
<keyword id="KW-0804">Transcription</keyword>
<keyword id="KW-0805">Transcription regulation</keyword>
<keyword id="KW-0832">Ubl conjugation</keyword>
<name>CSPA_MYCS2</name>
<accession>A0R5E1</accession>
<accession>I7FU90</accession>
<feature type="chain" id="PRO_0000396102" description="Probable cold shock protein A">
    <location>
        <begin position="1"/>
        <end position="67"/>
    </location>
</feature>
<feature type="domain" description="CSD">
    <location>
        <begin position="1"/>
        <end position="66"/>
    </location>
</feature>
<feature type="cross-link" description="Isoglutamyl lysine isopeptide (Lys-Gln) (interchain with Q-Cter in protein Pup)" evidence="2">
    <location>
        <position position="47"/>
    </location>
</feature>
<evidence type="ECO:0000250" key="1"/>
<evidence type="ECO:0000269" key="2">
    <source>
    </source>
</evidence>
<comment type="subcellular location">
    <subcellularLocation>
        <location evidence="1">Cytoplasm</location>
    </subcellularLocation>
</comment>
<reference key="1">
    <citation type="submission" date="2006-10" db="EMBL/GenBank/DDBJ databases">
        <authorList>
            <person name="Fleischmann R.D."/>
            <person name="Dodson R.J."/>
            <person name="Haft D.H."/>
            <person name="Merkel J.S."/>
            <person name="Nelson W.C."/>
            <person name="Fraser C.M."/>
        </authorList>
    </citation>
    <scope>NUCLEOTIDE SEQUENCE [LARGE SCALE GENOMIC DNA]</scope>
    <source>
        <strain>ATCC 700084 / mc(2)155</strain>
    </source>
</reference>
<reference key="2">
    <citation type="journal article" date="2007" name="Genome Biol.">
        <title>Interrupted coding sequences in Mycobacterium smegmatis: authentic mutations or sequencing errors?</title>
        <authorList>
            <person name="Deshayes C."/>
            <person name="Perrodou E."/>
            <person name="Gallien S."/>
            <person name="Euphrasie D."/>
            <person name="Schaeffer C."/>
            <person name="Van-Dorsselaer A."/>
            <person name="Poch O."/>
            <person name="Lecompte O."/>
            <person name="Reyrat J.-M."/>
        </authorList>
    </citation>
    <scope>NUCLEOTIDE SEQUENCE [LARGE SCALE GENOMIC DNA]</scope>
    <source>
        <strain>ATCC 700084 / mc(2)155</strain>
    </source>
</reference>
<reference key="3">
    <citation type="journal article" date="2009" name="Genome Res.">
        <title>Ortho-proteogenomics: multiple proteomes investigation through orthology and a new MS-based protocol.</title>
        <authorList>
            <person name="Gallien S."/>
            <person name="Perrodou E."/>
            <person name="Carapito C."/>
            <person name="Deshayes C."/>
            <person name="Reyrat J.-M."/>
            <person name="Van Dorsselaer A."/>
            <person name="Poch O."/>
            <person name="Schaeffer C."/>
            <person name="Lecompte O."/>
        </authorList>
    </citation>
    <scope>NUCLEOTIDE SEQUENCE [LARGE SCALE GENOMIC DNA]</scope>
    <source>
        <strain>ATCC 700084 / mc(2)155</strain>
    </source>
</reference>
<reference key="4">
    <citation type="journal article" date="2010" name="Mol. Biosyst.">
        <title>Expansion of the mycobacterial 'PUPylome'.</title>
        <authorList>
            <person name="Watrous J."/>
            <person name="Burns K."/>
            <person name="Liu W.T."/>
            <person name="Patel A."/>
            <person name="Hook V."/>
            <person name="Bafna V."/>
            <person name="Barry C.E. III"/>
            <person name="Bark S."/>
            <person name="Dorrestein P.C."/>
        </authorList>
    </citation>
    <scope>PUPYLATION AT LYS-47</scope>
    <scope>IDENTIFICATION BY MASS SPECTROMETRY</scope>
</reference>
<gene>
    <name type="primary">cspA</name>
    <name type="ordered locus">MSMEG_6159</name>
    <name type="ordered locus">MSMEI_6001</name>
</gene>
<protein>
    <recommendedName>
        <fullName>Probable cold shock protein A</fullName>
    </recommendedName>
</protein>
<organism>
    <name type="scientific">Mycolicibacterium smegmatis (strain ATCC 700084 / mc(2)155)</name>
    <name type="common">Mycobacterium smegmatis</name>
    <dbReference type="NCBI Taxonomy" id="246196"/>
    <lineage>
        <taxon>Bacteria</taxon>
        <taxon>Bacillati</taxon>
        <taxon>Actinomycetota</taxon>
        <taxon>Actinomycetes</taxon>
        <taxon>Mycobacteriales</taxon>
        <taxon>Mycobacteriaceae</taxon>
        <taxon>Mycolicibacterium</taxon>
    </lineage>
</organism>
<dbReference type="EMBL" id="CP000480">
    <property type="protein sequence ID" value="ABK75888.1"/>
    <property type="molecule type" value="Genomic_DNA"/>
</dbReference>
<dbReference type="EMBL" id="CP001663">
    <property type="protein sequence ID" value="AFP42433.1"/>
    <property type="molecule type" value="Genomic_DNA"/>
</dbReference>
<dbReference type="RefSeq" id="WP_011562175.1">
    <property type="nucleotide sequence ID" value="NZ_SIJM01000072.1"/>
</dbReference>
<dbReference type="RefSeq" id="YP_890379.1">
    <property type="nucleotide sequence ID" value="NC_008596.1"/>
</dbReference>
<dbReference type="SMR" id="A0R5E1"/>
<dbReference type="STRING" id="246196.MSMEG_6159"/>
<dbReference type="PaxDb" id="246196-MSMEI_6001"/>
<dbReference type="KEGG" id="msb:LJ00_30460"/>
<dbReference type="KEGG" id="msg:MSMEI_6001"/>
<dbReference type="KEGG" id="msm:MSMEG_6159"/>
<dbReference type="PATRIC" id="fig|246196.19.peg.5998"/>
<dbReference type="eggNOG" id="COG1278">
    <property type="taxonomic scope" value="Bacteria"/>
</dbReference>
<dbReference type="OrthoDB" id="7477356at2"/>
<dbReference type="Proteomes" id="UP000000757">
    <property type="component" value="Chromosome"/>
</dbReference>
<dbReference type="Proteomes" id="UP000006158">
    <property type="component" value="Chromosome"/>
</dbReference>
<dbReference type="GO" id="GO:0005737">
    <property type="term" value="C:cytoplasm"/>
    <property type="evidence" value="ECO:0007669"/>
    <property type="project" value="UniProtKB-SubCell"/>
</dbReference>
<dbReference type="GO" id="GO:0003677">
    <property type="term" value="F:DNA binding"/>
    <property type="evidence" value="ECO:0007669"/>
    <property type="project" value="UniProtKB-KW"/>
</dbReference>
<dbReference type="CDD" id="cd04458">
    <property type="entry name" value="CSP_CDS"/>
    <property type="match status" value="1"/>
</dbReference>
<dbReference type="FunFam" id="2.40.50.140:FF:000006">
    <property type="entry name" value="Cold shock protein CspC"/>
    <property type="match status" value="1"/>
</dbReference>
<dbReference type="Gene3D" id="2.40.50.140">
    <property type="entry name" value="Nucleic acid-binding proteins"/>
    <property type="match status" value="1"/>
</dbReference>
<dbReference type="InterPro" id="IPR012156">
    <property type="entry name" value="Cold_shock_CspA"/>
</dbReference>
<dbReference type="InterPro" id="IPR050181">
    <property type="entry name" value="Cold_shock_domain"/>
</dbReference>
<dbReference type="InterPro" id="IPR011129">
    <property type="entry name" value="CSD"/>
</dbReference>
<dbReference type="InterPro" id="IPR019844">
    <property type="entry name" value="CSD_CS"/>
</dbReference>
<dbReference type="InterPro" id="IPR002059">
    <property type="entry name" value="CSP_DNA-bd"/>
</dbReference>
<dbReference type="InterPro" id="IPR012340">
    <property type="entry name" value="NA-bd_OB-fold"/>
</dbReference>
<dbReference type="PANTHER" id="PTHR11544">
    <property type="entry name" value="COLD SHOCK DOMAIN CONTAINING PROTEINS"/>
    <property type="match status" value="1"/>
</dbReference>
<dbReference type="Pfam" id="PF00313">
    <property type="entry name" value="CSD"/>
    <property type="match status" value="1"/>
</dbReference>
<dbReference type="PIRSF" id="PIRSF002599">
    <property type="entry name" value="Cold_shock_A"/>
    <property type="match status" value="1"/>
</dbReference>
<dbReference type="PRINTS" id="PR00050">
    <property type="entry name" value="COLDSHOCK"/>
</dbReference>
<dbReference type="SMART" id="SM00357">
    <property type="entry name" value="CSP"/>
    <property type="match status" value="1"/>
</dbReference>
<dbReference type="SUPFAM" id="SSF50249">
    <property type="entry name" value="Nucleic acid-binding proteins"/>
    <property type="match status" value="1"/>
</dbReference>
<dbReference type="PROSITE" id="PS00352">
    <property type="entry name" value="CSD_1"/>
    <property type="match status" value="1"/>
</dbReference>
<dbReference type="PROSITE" id="PS51857">
    <property type="entry name" value="CSD_2"/>
    <property type="match status" value="1"/>
</dbReference>
<sequence length="67" mass="7347">MPQGTVKWFNAEKGFGFIAPEDGSADVFVHYTEIQGSGFRTLEENQKVEFEVGQSPKGPQATGVRTI</sequence>
<proteinExistence type="evidence at protein level"/>